<keyword id="KW-0227">DNA damage</keyword>
<keyword id="KW-0234">DNA repair</keyword>
<keyword id="KW-0235">DNA replication</keyword>
<keyword id="KW-0436">Ligase</keyword>
<keyword id="KW-0460">Magnesium</keyword>
<keyword id="KW-0464">Manganese</keyword>
<keyword id="KW-0479">Metal-binding</keyword>
<keyword id="KW-0520">NAD</keyword>
<keyword id="KW-1185">Reference proteome</keyword>
<keyword id="KW-0862">Zinc</keyword>
<organism>
    <name type="scientific">Parabacteroides distasonis (strain ATCC 8503 / DSM 20701 / CIP 104284 / JCM 5825 / NCTC 11152)</name>
    <dbReference type="NCBI Taxonomy" id="435591"/>
    <lineage>
        <taxon>Bacteria</taxon>
        <taxon>Pseudomonadati</taxon>
        <taxon>Bacteroidota</taxon>
        <taxon>Bacteroidia</taxon>
        <taxon>Bacteroidales</taxon>
        <taxon>Tannerellaceae</taxon>
        <taxon>Parabacteroides</taxon>
    </lineage>
</organism>
<protein>
    <recommendedName>
        <fullName evidence="1">DNA ligase</fullName>
        <ecNumber evidence="1">6.5.1.2</ecNumber>
    </recommendedName>
    <alternativeName>
        <fullName evidence="1">Polydeoxyribonucleotide synthase [NAD(+)]</fullName>
    </alternativeName>
</protein>
<evidence type="ECO:0000255" key="1">
    <source>
        <dbReference type="HAMAP-Rule" id="MF_01588"/>
    </source>
</evidence>
<dbReference type="EC" id="6.5.1.2" evidence="1"/>
<dbReference type="EMBL" id="CP000140">
    <property type="protein sequence ID" value="ABR42569.1"/>
    <property type="molecule type" value="Genomic_DNA"/>
</dbReference>
<dbReference type="RefSeq" id="WP_005857423.1">
    <property type="nucleotide sequence ID" value="NZ_LR215978.1"/>
</dbReference>
<dbReference type="SMR" id="A6LA55"/>
<dbReference type="STRING" id="435591.BDI_0799"/>
<dbReference type="PaxDb" id="435591-BDI_0799"/>
<dbReference type="GeneID" id="93521570"/>
<dbReference type="KEGG" id="pdi:BDI_0799"/>
<dbReference type="eggNOG" id="COG0272">
    <property type="taxonomic scope" value="Bacteria"/>
</dbReference>
<dbReference type="HOGENOM" id="CLU_007764_2_0_10"/>
<dbReference type="BioCyc" id="PDIS435591:G1G5A-819-MONOMER"/>
<dbReference type="Proteomes" id="UP000000566">
    <property type="component" value="Chromosome"/>
</dbReference>
<dbReference type="GO" id="GO:0005829">
    <property type="term" value="C:cytosol"/>
    <property type="evidence" value="ECO:0007669"/>
    <property type="project" value="TreeGrafter"/>
</dbReference>
<dbReference type="GO" id="GO:0003911">
    <property type="term" value="F:DNA ligase (NAD+) activity"/>
    <property type="evidence" value="ECO:0007669"/>
    <property type="project" value="UniProtKB-UniRule"/>
</dbReference>
<dbReference type="GO" id="GO:0046872">
    <property type="term" value="F:metal ion binding"/>
    <property type="evidence" value="ECO:0007669"/>
    <property type="project" value="UniProtKB-KW"/>
</dbReference>
<dbReference type="GO" id="GO:0006281">
    <property type="term" value="P:DNA repair"/>
    <property type="evidence" value="ECO:0007669"/>
    <property type="project" value="UniProtKB-KW"/>
</dbReference>
<dbReference type="GO" id="GO:0006260">
    <property type="term" value="P:DNA replication"/>
    <property type="evidence" value="ECO:0007669"/>
    <property type="project" value="UniProtKB-KW"/>
</dbReference>
<dbReference type="CDD" id="cd17748">
    <property type="entry name" value="BRCT_DNA_ligase_like"/>
    <property type="match status" value="1"/>
</dbReference>
<dbReference type="CDD" id="cd00114">
    <property type="entry name" value="LIGANc"/>
    <property type="match status" value="1"/>
</dbReference>
<dbReference type="FunFam" id="1.10.150.20:FF:000006">
    <property type="entry name" value="DNA ligase"/>
    <property type="match status" value="1"/>
</dbReference>
<dbReference type="FunFam" id="1.10.150.20:FF:000007">
    <property type="entry name" value="DNA ligase"/>
    <property type="match status" value="1"/>
</dbReference>
<dbReference type="FunFam" id="1.10.287.610:FF:000002">
    <property type="entry name" value="DNA ligase"/>
    <property type="match status" value="1"/>
</dbReference>
<dbReference type="FunFam" id="2.40.50.140:FF:000012">
    <property type="entry name" value="DNA ligase"/>
    <property type="match status" value="1"/>
</dbReference>
<dbReference type="FunFam" id="3.30.470.30:FF:000001">
    <property type="entry name" value="DNA ligase"/>
    <property type="match status" value="1"/>
</dbReference>
<dbReference type="Gene3D" id="6.20.10.30">
    <property type="match status" value="1"/>
</dbReference>
<dbReference type="Gene3D" id="1.10.150.20">
    <property type="entry name" value="5' to 3' exonuclease, C-terminal subdomain"/>
    <property type="match status" value="2"/>
</dbReference>
<dbReference type="Gene3D" id="3.40.50.10190">
    <property type="entry name" value="BRCT domain"/>
    <property type="match status" value="1"/>
</dbReference>
<dbReference type="Gene3D" id="3.30.470.30">
    <property type="entry name" value="DNA ligase/mRNA capping enzyme"/>
    <property type="match status" value="1"/>
</dbReference>
<dbReference type="Gene3D" id="1.10.287.610">
    <property type="entry name" value="Helix hairpin bin"/>
    <property type="match status" value="1"/>
</dbReference>
<dbReference type="Gene3D" id="2.40.50.140">
    <property type="entry name" value="Nucleic acid-binding proteins"/>
    <property type="match status" value="1"/>
</dbReference>
<dbReference type="HAMAP" id="MF_01588">
    <property type="entry name" value="DNA_ligase_A"/>
    <property type="match status" value="1"/>
</dbReference>
<dbReference type="InterPro" id="IPR001357">
    <property type="entry name" value="BRCT_dom"/>
</dbReference>
<dbReference type="InterPro" id="IPR036420">
    <property type="entry name" value="BRCT_dom_sf"/>
</dbReference>
<dbReference type="InterPro" id="IPR041663">
    <property type="entry name" value="DisA/LigA_HHH"/>
</dbReference>
<dbReference type="InterPro" id="IPR001679">
    <property type="entry name" value="DNA_ligase"/>
</dbReference>
<dbReference type="InterPro" id="IPR033136">
    <property type="entry name" value="DNA_ligase_CS"/>
</dbReference>
<dbReference type="InterPro" id="IPR013839">
    <property type="entry name" value="DNAligase_adenylation"/>
</dbReference>
<dbReference type="InterPro" id="IPR013840">
    <property type="entry name" value="DNAligase_N"/>
</dbReference>
<dbReference type="InterPro" id="IPR012340">
    <property type="entry name" value="NA-bd_OB-fold"/>
</dbReference>
<dbReference type="InterPro" id="IPR004150">
    <property type="entry name" value="NAD_DNA_ligase_OB"/>
</dbReference>
<dbReference type="InterPro" id="IPR010994">
    <property type="entry name" value="RuvA_2-like"/>
</dbReference>
<dbReference type="InterPro" id="IPR004149">
    <property type="entry name" value="Znf_DNAligase_C4"/>
</dbReference>
<dbReference type="NCBIfam" id="TIGR00575">
    <property type="entry name" value="dnlj"/>
    <property type="match status" value="1"/>
</dbReference>
<dbReference type="NCBIfam" id="NF005932">
    <property type="entry name" value="PRK07956.1"/>
    <property type="match status" value="1"/>
</dbReference>
<dbReference type="PANTHER" id="PTHR23389">
    <property type="entry name" value="CHROMOSOME TRANSMISSION FIDELITY FACTOR 18"/>
    <property type="match status" value="1"/>
</dbReference>
<dbReference type="PANTHER" id="PTHR23389:SF9">
    <property type="entry name" value="DNA LIGASE"/>
    <property type="match status" value="1"/>
</dbReference>
<dbReference type="Pfam" id="PF00533">
    <property type="entry name" value="BRCT"/>
    <property type="match status" value="1"/>
</dbReference>
<dbReference type="Pfam" id="PF01653">
    <property type="entry name" value="DNA_ligase_aden"/>
    <property type="match status" value="1"/>
</dbReference>
<dbReference type="Pfam" id="PF03120">
    <property type="entry name" value="DNA_ligase_OB"/>
    <property type="match status" value="1"/>
</dbReference>
<dbReference type="Pfam" id="PF03119">
    <property type="entry name" value="DNA_ligase_ZBD"/>
    <property type="match status" value="1"/>
</dbReference>
<dbReference type="Pfam" id="PF12826">
    <property type="entry name" value="HHH_2"/>
    <property type="match status" value="1"/>
</dbReference>
<dbReference type="Pfam" id="PF14520">
    <property type="entry name" value="HHH_5"/>
    <property type="match status" value="1"/>
</dbReference>
<dbReference type="Pfam" id="PF22745">
    <property type="entry name" value="Nlig-Ia"/>
    <property type="match status" value="1"/>
</dbReference>
<dbReference type="PIRSF" id="PIRSF001604">
    <property type="entry name" value="LigA"/>
    <property type="match status" value="1"/>
</dbReference>
<dbReference type="SMART" id="SM00292">
    <property type="entry name" value="BRCT"/>
    <property type="match status" value="1"/>
</dbReference>
<dbReference type="SMART" id="SM00532">
    <property type="entry name" value="LIGANc"/>
    <property type="match status" value="1"/>
</dbReference>
<dbReference type="SUPFAM" id="SSF52113">
    <property type="entry name" value="BRCT domain"/>
    <property type="match status" value="1"/>
</dbReference>
<dbReference type="SUPFAM" id="SSF56091">
    <property type="entry name" value="DNA ligase/mRNA capping enzyme, catalytic domain"/>
    <property type="match status" value="1"/>
</dbReference>
<dbReference type="SUPFAM" id="SSF50249">
    <property type="entry name" value="Nucleic acid-binding proteins"/>
    <property type="match status" value="1"/>
</dbReference>
<dbReference type="SUPFAM" id="SSF47781">
    <property type="entry name" value="RuvA domain 2-like"/>
    <property type="match status" value="1"/>
</dbReference>
<dbReference type="PROSITE" id="PS50172">
    <property type="entry name" value="BRCT"/>
    <property type="match status" value="1"/>
</dbReference>
<dbReference type="PROSITE" id="PS01056">
    <property type="entry name" value="DNA_LIGASE_N2"/>
    <property type="match status" value="1"/>
</dbReference>
<gene>
    <name evidence="1" type="primary">ligA</name>
    <name type="ordered locus">BDI_0799</name>
</gene>
<sequence length="664" mass="74715">MVEAKIKALRDELERHNYNYYVLSAPTISDFEFDKMMKELQELEAAHPEFADPDSPTRRVGSDLSKEFEQVVHKYPMLSLGNTYSEDEIRDFYDRTVRSLNEPFEIVAELKYDGTSISLTYEKGRLTRAVTRGDGTRGDDVTANIKTIRSVPLRLRGSDFPEEFEIRGEVLLPWAEFDRLNKEREEQEEPLFANPRNAASGTLKQQNPAIVASRKLDAYFYYLLGENLPAEGHYENLQAARAWGFKIPDVIRKCQSLQDIFDYIAYWDVERKNLPVATDGIVLKVNSLRQQRNLGFTSKSPRWAIAYKFQAERAETRLNSVSFQVGRTGTVTPVANLEPVLLAGTVVKRASLHNADIIEGLDLHIGDQVYVEKGGEIIPKIVGVNVEARSMLMGDKVRFIRVCPECGTPLVRPEGEAAHYCPNESGCPPQIKGRIEHFVTRKAMNINIGPETVEDLYNAGYVKDSADLYTLTVADLLRLERWAEKSAQNLMSSLEESKQVPFERVLFGLGIRFVGETVAKRLVSAFHSIEALEQASLEDLVAVDEIGERIAQSVLSYFSDEKNRTLVNRLKEQGLRMAVSEEQLANRSEKLKGLTIVISGTFSKHSRDEYKAMIEQHGGKNSGSVSGKTDYILAGENMGPAKLEKAAKLGVKIINEDAFLNMLE</sequence>
<feature type="chain" id="PRO_0000313351" description="DNA ligase">
    <location>
        <begin position="1"/>
        <end position="664"/>
    </location>
</feature>
<feature type="domain" description="BRCT" evidence="1">
    <location>
        <begin position="586"/>
        <end position="664"/>
    </location>
</feature>
<feature type="active site" description="N6-AMP-lysine intermediate" evidence="1">
    <location>
        <position position="111"/>
    </location>
</feature>
<feature type="binding site" evidence="1">
    <location>
        <begin position="30"/>
        <end position="34"/>
    </location>
    <ligand>
        <name>NAD(+)</name>
        <dbReference type="ChEBI" id="CHEBI:57540"/>
    </ligand>
</feature>
<feature type="binding site" evidence="1">
    <location>
        <begin position="79"/>
        <end position="80"/>
    </location>
    <ligand>
        <name>NAD(+)</name>
        <dbReference type="ChEBI" id="CHEBI:57540"/>
    </ligand>
</feature>
<feature type="binding site" evidence="1">
    <location>
        <position position="109"/>
    </location>
    <ligand>
        <name>NAD(+)</name>
        <dbReference type="ChEBI" id="CHEBI:57540"/>
    </ligand>
</feature>
<feature type="binding site" evidence="1">
    <location>
        <position position="132"/>
    </location>
    <ligand>
        <name>NAD(+)</name>
        <dbReference type="ChEBI" id="CHEBI:57540"/>
    </ligand>
</feature>
<feature type="binding site" evidence="1">
    <location>
        <position position="169"/>
    </location>
    <ligand>
        <name>NAD(+)</name>
        <dbReference type="ChEBI" id="CHEBI:57540"/>
    </ligand>
</feature>
<feature type="binding site" evidence="1">
    <location>
        <position position="284"/>
    </location>
    <ligand>
        <name>NAD(+)</name>
        <dbReference type="ChEBI" id="CHEBI:57540"/>
    </ligand>
</feature>
<feature type="binding site" evidence="1">
    <location>
        <position position="308"/>
    </location>
    <ligand>
        <name>NAD(+)</name>
        <dbReference type="ChEBI" id="CHEBI:57540"/>
    </ligand>
</feature>
<feature type="binding site" evidence="1">
    <location>
        <position position="403"/>
    </location>
    <ligand>
        <name>Zn(2+)</name>
        <dbReference type="ChEBI" id="CHEBI:29105"/>
    </ligand>
</feature>
<feature type="binding site" evidence="1">
    <location>
        <position position="406"/>
    </location>
    <ligand>
        <name>Zn(2+)</name>
        <dbReference type="ChEBI" id="CHEBI:29105"/>
    </ligand>
</feature>
<feature type="binding site" evidence="1">
    <location>
        <position position="421"/>
    </location>
    <ligand>
        <name>Zn(2+)</name>
        <dbReference type="ChEBI" id="CHEBI:29105"/>
    </ligand>
</feature>
<feature type="binding site" evidence="1">
    <location>
        <position position="427"/>
    </location>
    <ligand>
        <name>Zn(2+)</name>
        <dbReference type="ChEBI" id="CHEBI:29105"/>
    </ligand>
</feature>
<name>DNLJ_PARD8</name>
<comment type="function">
    <text evidence="1">DNA ligase that catalyzes the formation of phosphodiester linkages between 5'-phosphoryl and 3'-hydroxyl groups in double-stranded DNA using NAD as a coenzyme and as the energy source for the reaction. It is essential for DNA replication and repair of damaged DNA.</text>
</comment>
<comment type="catalytic activity">
    <reaction evidence="1">
        <text>NAD(+) + (deoxyribonucleotide)n-3'-hydroxyl + 5'-phospho-(deoxyribonucleotide)m = (deoxyribonucleotide)n+m + AMP + beta-nicotinamide D-nucleotide.</text>
        <dbReference type="EC" id="6.5.1.2"/>
    </reaction>
</comment>
<comment type="cofactor">
    <cofactor evidence="1">
        <name>Mg(2+)</name>
        <dbReference type="ChEBI" id="CHEBI:18420"/>
    </cofactor>
    <cofactor evidence="1">
        <name>Mn(2+)</name>
        <dbReference type="ChEBI" id="CHEBI:29035"/>
    </cofactor>
</comment>
<comment type="similarity">
    <text evidence="1">Belongs to the NAD-dependent DNA ligase family. LigA subfamily.</text>
</comment>
<proteinExistence type="inferred from homology"/>
<accession>A6LA55</accession>
<reference key="1">
    <citation type="journal article" date="2007" name="PLoS Biol.">
        <title>Evolution of symbiotic bacteria in the distal human intestine.</title>
        <authorList>
            <person name="Xu J."/>
            <person name="Mahowald M.A."/>
            <person name="Ley R.E."/>
            <person name="Lozupone C.A."/>
            <person name="Hamady M."/>
            <person name="Martens E.C."/>
            <person name="Henrissat B."/>
            <person name="Coutinho P.M."/>
            <person name="Minx P."/>
            <person name="Latreille P."/>
            <person name="Cordum H."/>
            <person name="Van Brunt A."/>
            <person name="Kim K."/>
            <person name="Fulton R.S."/>
            <person name="Fulton L.A."/>
            <person name="Clifton S.W."/>
            <person name="Wilson R.K."/>
            <person name="Knight R.D."/>
            <person name="Gordon J.I."/>
        </authorList>
    </citation>
    <scope>NUCLEOTIDE SEQUENCE [LARGE SCALE GENOMIC DNA]</scope>
    <source>
        <strain>ATCC 8503 / DSM 20701 / CIP 104284 / JCM 5825 / NCTC 11152</strain>
    </source>
</reference>